<sequence length="183" mass="21177">MKKKTSLSEEDQALFRQLMVGTRKIKQDTIVHRPLRKKITEVPTRRLIQEQADASHYFSDEFQPLLNTEGPVKYVREDVSHFELKKMRRGDYSPELFLDLHGLTQLQAKQELGALIAACRREHIFCACVMHGHGKHILKQQTPLWLAQHPHVMAFHQAPKEYGGDAALLVLIEVEEWQPPELP</sequence>
<feature type="chain" id="PRO_1000136048" description="Ribosome rescue factor SmrB">
    <location>
        <begin position="1"/>
        <end position="183"/>
    </location>
</feature>
<feature type="domain" description="Smr" evidence="1">
    <location>
        <begin position="98"/>
        <end position="173"/>
    </location>
</feature>
<reference key="1">
    <citation type="journal article" date="2011" name="J. Bacteriol.">
        <title>Comparative genomics of 28 Salmonella enterica isolates: evidence for CRISPR-mediated adaptive sublineage evolution.</title>
        <authorList>
            <person name="Fricke W.F."/>
            <person name="Mammel M.K."/>
            <person name="McDermott P.F."/>
            <person name="Tartera C."/>
            <person name="White D.G."/>
            <person name="Leclerc J.E."/>
            <person name="Ravel J."/>
            <person name="Cebula T.A."/>
        </authorList>
    </citation>
    <scope>NUCLEOTIDE SEQUENCE [LARGE SCALE GENOMIC DNA]</scope>
    <source>
        <strain>CT_02021853</strain>
    </source>
</reference>
<evidence type="ECO:0000255" key="1">
    <source>
        <dbReference type="HAMAP-Rule" id="MF_01042"/>
    </source>
</evidence>
<organism>
    <name type="scientific">Salmonella dublin (strain CT_02021853)</name>
    <dbReference type="NCBI Taxonomy" id="439851"/>
    <lineage>
        <taxon>Bacteria</taxon>
        <taxon>Pseudomonadati</taxon>
        <taxon>Pseudomonadota</taxon>
        <taxon>Gammaproteobacteria</taxon>
        <taxon>Enterobacterales</taxon>
        <taxon>Enterobacteriaceae</taxon>
        <taxon>Salmonella</taxon>
    </lineage>
</organism>
<dbReference type="EC" id="3.1.-.-" evidence="1"/>
<dbReference type="EMBL" id="CP001144">
    <property type="protein sequence ID" value="ACH74236.1"/>
    <property type="molecule type" value="Genomic_DNA"/>
</dbReference>
<dbReference type="RefSeq" id="WP_000730794.1">
    <property type="nucleotide sequence ID" value="NC_011205.1"/>
</dbReference>
<dbReference type="SMR" id="B5FPM8"/>
<dbReference type="KEGG" id="sed:SeD_A2739"/>
<dbReference type="HOGENOM" id="CLU_055978_4_0_6"/>
<dbReference type="Proteomes" id="UP000008322">
    <property type="component" value="Chromosome"/>
</dbReference>
<dbReference type="GO" id="GO:0004521">
    <property type="term" value="F:RNA endonuclease activity"/>
    <property type="evidence" value="ECO:0007669"/>
    <property type="project" value="UniProtKB-UniRule"/>
</dbReference>
<dbReference type="GO" id="GO:0019843">
    <property type="term" value="F:rRNA binding"/>
    <property type="evidence" value="ECO:0007669"/>
    <property type="project" value="UniProtKB-UniRule"/>
</dbReference>
<dbReference type="GO" id="GO:0072344">
    <property type="term" value="P:rescue of stalled ribosome"/>
    <property type="evidence" value="ECO:0007669"/>
    <property type="project" value="UniProtKB-UniRule"/>
</dbReference>
<dbReference type="Gene3D" id="3.30.1370.110">
    <property type="match status" value="1"/>
</dbReference>
<dbReference type="HAMAP" id="MF_01042">
    <property type="entry name" value="SmrB"/>
    <property type="match status" value="1"/>
</dbReference>
<dbReference type="InterPro" id="IPR002625">
    <property type="entry name" value="Smr_dom"/>
</dbReference>
<dbReference type="InterPro" id="IPR036063">
    <property type="entry name" value="Smr_dom_sf"/>
</dbReference>
<dbReference type="InterPro" id="IPR022990">
    <property type="entry name" value="SmrB-like"/>
</dbReference>
<dbReference type="NCBIfam" id="NF003432">
    <property type="entry name" value="PRK04946.1"/>
    <property type="match status" value="1"/>
</dbReference>
<dbReference type="PANTHER" id="PTHR35562">
    <property type="entry name" value="DNA ENDONUCLEASE SMRA-RELATED"/>
    <property type="match status" value="1"/>
</dbReference>
<dbReference type="PANTHER" id="PTHR35562:SF1">
    <property type="entry name" value="UPF0115 PROTEIN YFCN"/>
    <property type="match status" value="1"/>
</dbReference>
<dbReference type="Pfam" id="PF01713">
    <property type="entry name" value="Smr"/>
    <property type="match status" value="1"/>
</dbReference>
<dbReference type="SMART" id="SM00463">
    <property type="entry name" value="SMR"/>
    <property type="match status" value="1"/>
</dbReference>
<dbReference type="SUPFAM" id="SSF160443">
    <property type="entry name" value="SMR domain-like"/>
    <property type="match status" value="1"/>
</dbReference>
<dbReference type="PROSITE" id="PS50828">
    <property type="entry name" value="SMR"/>
    <property type="match status" value="1"/>
</dbReference>
<gene>
    <name evidence="1" type="primary">smrB</name>
    <name type="ordered locus">SeD_A2739</name>
</gene>
<protein>
    <recommendedName>
        <fullName evidence="1">Ribosome rescue factor SmrB</fullName>
        <ecNumber evidence="1">3.1.-.-</ecNumber>
    </recommendedName>
</protein>
<accession>B5FPM8</accession>
<proteinExistence type="inferred from homology"/>
<name>SMRB_SALDC</name>
<keyword id="KW-0255">Endonuclease</keyword>
<keyword id="KW-0378">Hydrolase</keyword>
<keyword id="KW-0540">Nuclease</keyword>
<keyword id="KW-0694">RNA-binding</keyword>
<keyword id="KW-0699">rRNA-binding</keyword>
<comment type="function">
    <text evidence="1">Acts as a ribosome collision sensor. Detects stalled/collided disomes (pairs of ribosomes where the leading ribosome is stalled and a second ribosome has collided with it) and endonucleolytically cleaves mRNA at the 5' boundary of the stalled ribosome. Stalled/collided disomes form a new interface (primarily via the 30S subunits) that binds SmrB. Cleaved mRNA becomes available for tmRNA ligation, leading to ribosomal subunit dissociation and rescue of stalled ribosomes.</text>
</comment>
<comment type="subunit">
    <text evidence="1">Associates with collided ribosomes, but not with correctly translating polysomes.</text>
</comment>
<comment type="similarity">
    <text evidence="1">Belongs to the SmrB family.</text>
</comment>